<keyword id="KW-1185">Reference proteome</keyword>
<protein>
    <recommendedName>
        <fullName>Uncharacterized protein Mb1309</fullName>
    </recommendedName>
</protein>
<organism>
    <name type="scientific">Mycobacterium bovis (strain ATCC BAA-935 / AF2122/97)</name>
    <dbReference type="NCBI Taxonomy" id="233413"/>
    <lineage>
        <taxon>Bacteria</taxon>
        <taxon>Bacillati</taxon>
        <taxon>Actinomycetota</taxon>
        <taxon>Actinomycetes</taxon>
        <taxon>Mycobacteriales</taxon>
        <taxon>Mycobacteriaceae</taxon>
        <taxon>Mycobacterium</taxon>
        <taxon>Mycobacterium tuberculosis complex</taxon>
    </lineage>
</organism>
<reference key="1">
    <citation type="journal article" date="2003" name="Proc. Natl. Acad. Sci. U.S.A.">
        <title>The complete genome sequence of Mycobacterium bovis.</title>
        <authorList>
            <person name="Garnier T."/>
            <person name="Eiglmeier K."/>
            <person name="Camus J.-C."/>
            <person name="Medina N."/>
            <person name="Mansoor H."/>
            <person name="Pryor M."/>
            <person name="Duthoy S."/>
            <person name="Grondin S."/>
            <person name="Lacroix C."/>
            <person name="Monsempe C."/>
            <person name="Simon S."/>
            <person name="Harris B."/>
            <person name="Atkin R."/>
            <person name="Doggett J."/>
            <person name="Mayes R."/>
            <person name="Keating L."/>
            <person name="Wheeler P.R."/>
            <person name="Parkhill J."/>
            <person name="Barrell B.G."/>
            <person name="Cole S.T."/>
            <person name="Gordon S.V."/>
            <person name="Hewinson R.G."/>
        </authorList>
    </citation>
    <scope>NUCLEOTIDE SEQUENCE [LARGE SCALE GENOMIC DNA]</scope>
    <source>
        <strain>ATCC BAA-935 / AF2122/97</strain>
    </source>
</reference>
<reference key="2">
    <citation type="journal article" date="2017" name="Genome Announc.">
        <title>Updated reference genome sequence and annotation of Mycobacterium bovis AF2122/97.</title>
        <authorList>
            <person name="Malone K.M."/>
            <person name="Farrell D."/>
            <person name="Stuber T.P."/>
            <person name="Schubert O.T."/>
            <person name="Aebersold R."/>
            <person name="Robbe-Austerman S."/>
            <person name="Gordon S.V."/>
        </authorList>
    </citation>
    <scope>NUCLEOTIDE SEQUENCE [LARGE SCALE GENOMIC DNA]</scope>
    <scope>GENOME REANNOTATION</scope>
    <source>
        <strain>ATCC BAA-935 / AF2122/97</strain>
    </source>
</reference>
<accession>P64796</accession>
<accession>A0A1R3Y008</accession>
<accession>Q11042</accession>
<accession>X2BHH7</accession>
<gene>
    <name type="ordered locus">BQ2027_MB1309</name>
</gene>
<feature type="chain" id="PRO_0000103783" description="Uncharacterized protein Mb1309">
    <location>
        <begin position="1"/>
        <end position="875"/>
    </location>
</feature>
<sequence length="875" mass="93351">MKLHRLALTNYRGIAHRDVEFPDHGVVVVCGANEIGKSSMVEALDLLLEYKDRSTKKEVKQVKPTNADVGSEVIAEISSGPYRFVYRKRFHKRCETELTVLAPRREQLTGDEAHERVRTMLAETVDTELWHAQRVLQAASTAAVDLSGCDALSRALDLAAGDDAALSGTESLLIERIEAEYARYFTPTGRPTGEWSAAVSRLAAAEAAVADCAAAVAEVDDGVRRHTELTEQVAELSQQLLAHQLRLEAARVAAEKIAAITDDAREAKLIATAAAATSGASTAAHAGRLGLLTEIDTRTAAVVAAEAKARQAADEQATARAEAEACDAALTEATQVLTAVRLRAESARRTLDQLADCEEADRLAARLARIDDIEGDRDRVCAELSAVTLTEELLSRIERAAAAVDRGGAQLASISAAVEFTAAVDIELGVGDQRVSLSAGQSWSVTATGPTEVKVPGVLTARIVPGATALDFQAKYAAAQQELADALAAGEVADLAAARSADLCRRELLSRRDQLTATLAGLCGDEQVDQLRSRLEQLCAGQPAELDLVSTDTATARAELDAVEAARIAAEKDCETRRQIAAGAARRLAETSTRATVLQNAAAAESAELGAAMTRLACERASVGDDELAAKAEADLRVLQTAEQRVIDLADELAATAPDAVAAELAEAADAVELLRERHDEAIRALHEVGVELSVFGTQGRKGKLDAAETEREHAASHHARVGRRARAARLLRSVMARHRDTTRLRYVEPYRAELHRLGRPVFGPSFEVEVDTDLRIRSRTLDDRTVPYECLSGGAKEQLGILARLAGAALVAKEDAVPVLIDDALGFTDPERLAKMGEVFDTIGADGQVIVLTCSPTRYGGVKGAHRIDLDAIQ</sequence>
<name>Y1309_MYCBO</name>
<proteinExistence type="predicted"/>
<dbReference type="EMBL" id="LT708304">
    <property type="protein sequence ID" value="SIT99912.1"/>
    <property type="molecule type" value="Genomic_DNA"/>
</dbReference>
<dbReference type="RefSeq" id="NP_854963.1">
    <property type="nucleotide sequence ID" value="NC_002945.3"/>
</dbReference>
<dbReference type="RefSeq" id="WP_003898806.1">
    <property type="nucleotide sequence ID" value="NC_002945.4"/>
</dbReference>
<dbReference type="KEGG" id="mbo:BQ2027_MB1309"/>
<dbReference type="PATRIC" id="fig|233413.5.peg.1434"/>
<dbReference type="Proteomes" id="UP000001419">
    <property type="component" value="Chromosome"/>
</dbReference>
<dbReference type="Gene3D" id="3.40.50.300">
    <property type="entry name" value="P-loop containing nucleotide triphosphate hydrolases"/>
    <property type="match status" value="2"/>
</dbReference>
<dbReference type="InterPro" id="IPR041685">
    <property type="entry name" value="AAA_GajA/Old/RecF-like"/>
</dbReference>
<dbReference type="InterPro" id="IPR027417">
    <property type="entry name" value="P-loop_NTPase"/>
</dbReference>
<dbReference type="PANTHER" id="PTHR41259">
    <property type="entry name" value="DOUBLE-STRAND BREAK REPAIR RAD50 ATPASE, PUTATIVE-RELATED"/>
    <property type="match status" value="1"/>
</dbReference>
<dbReference type="PANTHER" id="PTHR41259:SF1">
    <property type="entry name" value="DOUBLE-STRAND BREAK REPAIR RAD50 ATPASE, PUTATIVE-RELATED"/>
    <property type="match status" value="1"/>
</dbReference>
<dbReference type="Pfam" id="PF13175">
    <property type="entry name" value="AAA_15"/>
    <property type="match status" value="1"/>
</dbReference>
<dbReference type="SUPFAM" id="SSF52540">
    <property type="entry name" value="P-loop containing nucleoside triphosphate hydrolases"/>
    <property type="match status" value="1"/>
</dbReference>